<evidence type="ECO:0000255" key="1">
    <source>
        <dbReference type="HAMAP-Rule" id="MF_01310"/>
    </source>
</evidence>
<evidence type="ECO:0000305" key="2"/>
<keyword id="KW-1185">Reference proteome</keyword>
<keyword id="KW-0687">Ribonucleoprotein</keyword>
<keyword id="KW-0689">Ribosomal protein</keyword>
<keyword id="KW-0694">RNA-binding</keyword>
<keyword id="KW-0699">rRNA-binding</keyword>
<feature type="chain" id="PRO_0000294841" description="Small ribosomal subunit protein uS11">
    <location>
        <begin position="1"/>
        <end position="129"/>
    </location>
</feature>
<name>RS11_RHOP2</name>
<protein>
    <recommendedName>
        <fullName evidence="1">Small ribosomal subunit protein uS11</fullName>
    </recommendedName>
    <alternativeName>
        <fullName evidence="2">30S ribosomal protein S11</fullName>
    </alternativeName>
</protein>
<accession>Q2IXN7</accession>
<sequence length="129" mass="13864">MAKEAGRIRRRERKNIASGIAHVNSSFNNTTITITDAQGNAIAWSSAGTMGFKGSRKSTPYAAQVAAEDVAKKAQEHGMRTLEVEVAGPGSGRESALRALQASGFTVTSIRDVTTIPHNGCRPRKRRRV</sequence>
<organism>
    <name type="scientific">Rhodopseudomonas palustris (strain HaA2)</name>
    <dbReference type="NCBI Taxonomy" id="316058"/>
    <lineage>
        <taxon>Bacteria</taxon>
        <taxon>Pseudomonadati</taxon>
        <taxon>Pseudomonadota</taxon>
        <taxon>Alphaproteobacteria</taxon>
        <taxon>Hyphomicrobiales</taxon>
        <taxon>Nitrobacteraceae</taxon>
        <taxon>Rhodopseudomonas</taxon>
    </lineage>
</organism>
<proteinExistence type="inferred from homology"/>
<reference key="1">
    <citation type="submission" date="2006-01" db="EMBL/GenBank/DDBJ databases">
        <title>Complete sequence of Rhodopseudomonas palustris HaA2.</title>
        <authorList>
            <consortium name="US DOE Joint Genome Institute"/>
            <person name="Copeland A."/>
            <person name="Lucas S."/>
            <person name="Lapidus A."/>
            <person name="Barry K."/>
            <person name="Detter J.C."/>
            <person name="Glavina T."/>
            <person name="Hammon N."/>
            <person name="Israni S."/>
            <person name="Pitluck S."/>
            <person name="Chain P."/>
            <person name="Malfatti S."/>
            <person name="Shin M."/>
            <person name="Vergez L."/>
            <person name="Schmutz J."/>
            <person name="Larimer F."/>
            <person name="Land M."/>
            <person name="Hauser L."/>
            <person name="Pelletier D.A."/>
            <person name="Kyrpides N."/>
            <person name="Anderson I."/>
            <person name="Oda Y."/>
            <person name="Harwood C.S."/>
            <person name="Richardson P."/>
        </authorList>
    </citation>
    <scope>NUCLEOTIDE SEQUENCE [LARGE SCALE GENOMIC DNA]</scope>
    <source>
        <strain>HaA2</strain>
    </source>
</reference>
<comment type="function">
    <text evidence="1">Located on the platform of the 30S subunit, it bridges several disparate RNA helices of the 16S rRNA. Forms part of the Shine-Dalgarno cleft in the 70S ribosome.</text>
</comment>
<comment type="subunit">
    <text evidence="1">Part of the 30S ribosomal subunit. Interacts with proteins S7 and S18. Binds to IF-3.</text>
</comment>
<comment type="similarity">
    <text evidence="1">Belongs to the universal ribosomal protein uS11 family.</text>
</comment>
<dbReference type="EMBL" id="CP000250">
    <property type="protein sequence ID" value="ABD07023.1"/>
    <property type="molecule type" value="Genomic_DNA"/>
</dbReference>
<dbReference type="RefSeq" id="WP_011441208.1">
    <property type="nucleotide sequence ID" value="NC_007778.1"/>
</dbReference>
<dbReference type="SMR" id="Q2IXN7"/>
<dbReference type="STRING" id="316058.RPB_2318"/>
<dbReference type="KEGG" id="rpb:RPB_2318"/>
<dbReference type="eggNOG" id="COG0100">
    <property type="taxonomic scope" value="Bacteria"/>
</dbReference>
<dbReference type="HOGENOM" id="CLU_072439_5_0_5"/>
<dbReference type="OrthoDB" id="9806415at2"/>
<dbReference type="Proteomes" id="UP000008809">
    <property type="component" value="Chromosome"/>
</dbReference>
<dbReference type="GO" id="GO:1990904">
    <property type="term" value="C:ribonucleoprotein complex"/>
    <property type="evidence" value="ECO:0007669"/>
    <property type="project" value="UniProtKB-KW"/>
</dbReference>
<dbReference type="GO" id="GO:0005840">
    <property type="term" value="C:ribosome"/>
    <property type="evidence" value="ECO:0007669"/>
    <property type="project" value="UniProtKB-KW"/>
</dbReference>
<dbReference type="GO" id="GO:0019843">
    <property type="term" value="F:rRNA binding"/>
    <property type="evidence" value="ECO:0007669"/>
    <property type="project" value="UniProtKB-UniRule"/>
</dbReference>
<dbReference type="GO" id="GO:0003735">
    <property type="term" value="F:structural constituent of ribosome"/>
    <property type="evidence" value="ECO:0007669"/>
    <property type="project" value="InterPro"/>
</dbReference>
<dbReference type="GO" id="GO:0006412">
    <property type="term" value="P:translation"/>
    <property type="evidence" value="ECO:0007669"/>
    <property type="project" value="UniProtKB-UniRule"/>
</dbReference>
<dbReference type="FunFam" id="3.30.420.80:FF:000001">
    <property type="entry name" value="30S ribosomal protein S11"/>
    <property type="match status" value="1"/>
</dbReference>
<dbReference type="Gene3D" id="3.30.420.80">
    <property type="entry name" value="Ribosomal protein S11"/>
    <property type="match status" value="1"/>
</dbReference>
<dbReference type="HAMAP" id="MF_01310">
    <property type="entry name" value="Ribosomal_uS11"/>
    <property type="match status" value="1"/>
</dbReference>
<dbReference type="InterPro" id="IPR001971">
    <property type="entry name" value="Ribosomal_uS11"/>
</dbReference>
<dbReference type="InterPro" id="IPR019981">
    <property type="entry name" value="Ribosomal_uS11_bac-type"/>
</dbReference>
<dbReference type="InterPro" id="IPR036967">
    <property type="entry name" value="Ribosomal_uS11_sf"/>
</dbReference>
<dbReference type="NCBIfam" id="NF003698">
    <property type="entry name" value="PRK05309.1"/>
    <property type="match status" value="1"/>
</dbReference>
<dbReference type="NCBIfam" id="TIGR03632">
    <property type="entry name" value="uS11_bact"/>
    <property type="match status" value="1"/>
</dbReference>
<dbReference type="PANTHER" id="PTHR11759">
    <property type="entry name" value="40S RIBOSOMAL PROTEIN S14/30S RIBOSOMAL PROTEIN S11"/>
    <property type="match status" value="1"/>
</dbReference>
<dbReference type="Pfam" id="PF00411">
    <property type="entry name" value="Ribosomal_S11"/>
    <property type="match status" value="1"/>
</dbReference>
<dbReference type="PIRSF" id="PIRSF002131">
    <property type="entry name" value="Ribosomal_S11"/>
    <property type="match status" value="1"/>
</dbReference>
<dbReference type="SUPFAM" id="SSF53137">
    <property type="entry name" value="Translational machinery components"/>
    <property type="match status" value="1"/>
</dbReference>
<gene>
    <name evidence="1" type="primary">rpsK</name>
    <name type="ordered locus">RPB_2318</name>
</gene>